<protein>
    <recommendedName>
        <fullName evidence="1">Threonine--tRNA ligase</fullName>
        <ecNumber evidence="1">6.1.1.3</ecNumber>
    </recommendedName>
    <alternativeName>
        <fullName evidence="1">Threonyl-tRNA synthetase</fullName>
        <shortName evidence="1">ThrRS</shortName>
    </alternativeName>
</protein>
<gene>
    <name evidence="1" type="primary">thrS</name>
    <name type="ordered locus">Maqu_2061</name>
</gene>
<feature type="chain" id="PRO_1000020421" description="Threonine--tRNA ligase">
    <location>
        <begin position="1"/>
        <end position="641"/>
    </location>
</feature>
<feature type="domain" description="TGS" evidence="2">
    <location>
        <begin position="1"/>
        <end position="61"/>
    </location>
</feature>
<feature type="region of interest" description="Catalytic" evidence="1">
    <location>
        <begin position="242"/>
        <end position="533"/>
    </location>
</feature>
<feature type="binding site" evidence="1">
    <location>
        <position position="333"/>
    </location>
    <ligand>
        <name>Zn(2+)</name>
        <dbReference type="ChEBI" id="CHEBI:29105"/>
    </ligand>
</feature>
<feature type="binding site" evidence="1">
    <location>
        <position position="384"/>
    </location>
    <ligand>
        <name>Zn(2+)</name>
        <dbReference type="ChEBI" id="CHEBI:29105"/>
    </ligand>
</feature>
<feature type="binding site" evidence="1">
    <location>
        <position position="510"/>
    </location>
    <ligand>
        <name>Zn(2+)</name>
        <dbReference type="ChEBI" id="CHEBI:29105"/>
    </ligand>
</feature>
<sequence>MPVITLPDGSHRSFAEPVTVHDVAADIGAGLAKAALAGKVNGKLVDTSHLIENDTELAIVTERDEDGVDIIRHSTAHLMAMAVQELFPGAQVTIGPVIENGFYYDFKYERPFTNEDMARIEKRMEELAKQDLPVSRSIMSRDEAIKLFNEMGEEYKVRIIEDIPGEEDLSFYRQGDFIDLCRGPHVPSTGKLKAFKLTKVAGAYWRGDTSNEQLQRIYGTAWGNKKDLKAYLHRLEEAEKRDHRKIGKKLGLFHMQEEAPGMVFWHPDGWSLYQEVEQYMRAQQHKHGYKEIKTPQVVSRTLWEKSGHWDKFKDDMFTTESEKHDYAIKPMNCPCHVQVFNQGLKSYKDLPLRLAEFGSCHRNEASGALHGLMRVRGFTQDDAHIFCEEDAIQEEVSAFIAMLHEIYADFGFSEILYKLSTRPEKRVGSDEVWDKSEAALEQALNREGVDWELLPGEGAFYGPKIEFSLKDCLGRVWQCGTIQVDFSMPGRLGAQYVADNSERKTPVMLHRAVLGSFERFIGILIEEYEGAFPTWLAPTQVAVLNITDKQRDYCQNLAKKLDSSGYRVNADLRNEKIGFKIREHTLNKVPYLVVVGDKEIENNAVAVRTRKGEDLGTMSVDDFEKLLAADVERKGRTKTEI</sequence>
<evidence type="ECO:0000255" key="1">
    <source>
        <dbReference type="HAMAP-Rule" id="MF_00184"/>
    </source>
</evidence>
<evidence type="ECO:0000255" key="2">
    <source>
        <dbReference type="PROSITE-ProRule" id="PRU01228"/>
    </source>
</evidence>
<dbReference type="EC" id="6.1.1.3" evidence="1"/>
<dbReference type="EMBL" id="CP000514">
    <property type="protein sequence ID" value="ABM19142.1"/>
    <property type="molecule type" value="Genomic_DNA"/>
</dbReference>
<dbReference type="RefSeq" id="WP_011785534.1">
    <property type="nucleotide sequence ID" value="NC_008740.1"/>
</dbReference>
<dbReference type="SMR" id="A1U2C3"/>
<dbReference type="STRING" id="351348.Maqu_2061"/>
<dbReference type="KEGG" id="maq:Maqu_2061"/>
<dbReference type="eggNOG" id="COG0441">
    <property type="taxonomic scope" value="Bacteria"/>
</dbReference>
<dbReference type="HOGENOM" id="CLU_008554_0_1_6"/>
<dbReference type="OrthoDB" id="9802304at2"/>
<dbReference type="Proteomes" id="UP000000998">
    <property type="component" value="Chromosome"/>
</dbReference>
<dbReference type="GO" id="GO:0005829">
    <property type="term" value="C:cytosol"/>
    <property type="evidence" value="ECO:0007669"/>
    <property type="project" value="TreeGrafter"/>
</dbReference>
<dbReference type="GO" id="GO:0005524">
    <property type="term" value="F:ATP binding"/>
    <property type="evidence" value="ECO:0007669"/>
    <property type="project" value="UniProtKB-UniRule"/>
</dbReference>
<dbReference type="GO" id="GO:0046872">
    <property type="term" value="F:metal ion binding"/>
    <property type="evidence" value="ECO:0007669"/>
    <property type="project" value="UniProtKB-KW"/>
</dbReference>
<dbReference type="GO" id="GO:0004829">
    <property type="term" value="F:threonine-tRNA ligase activity"/>
    <property type="evidence" value="ECO:0007669"/>
    <property type="project" value="UniProtKB-UniRule"/>
</dbReference>
<dbReference type="GO" id="GO:0000049">
    <property type="term" value="F:tRNA binding"/>
    <property type="evidence" value="ECO:0007669"/>
    <property type="project" value="UniProtKB-KW"/>
</dbReference>
<dbReference type="GO" id="GO:0006435">
    <property type="term" value="P:threonyl-tRNA aminoacylation"/>
    <property type="evidence" value="ECO:0007669"/>
    <property type="project" value="UniProtKB-UniRule"/>
</dbReference>
<dbReference type="CDD" id="cd01667">
    <property type="entry name" value="TGS_ThrRS"/>
    <property type="match status" value="1"/>
</dbReference>
<dbReference type="CDD" id="cd00860">
    <property type="entry name" value="ThrRS_anticodon"/>
    <property type="match status" value="1"/>
</dbReference>
<dbReference type="CDD" id="cd00771">
    <property type="entry name" value="ThrRS_core"/>
    <property type="match status" value="1"/>
</dbReference>
<dbReference type="FunFam" id="3.10.20.30:FF:000005">
    <property type="entry name" value="Threonine--tRNA ligase"/>
    <property type="match status" value="1"/>
</dbReference>
<dbReference type="FunFam" id="3.30.54.20:FF:000002">
    <property type="entry name" value="Threonine--tRNA ligase"/>
    <property type="match status" value="1"/>
</dbReference>
<dbReference type="FunFam" id="3.30.930.10:FF:000002">
    <property type="entry name" value="Threonine--tRNA ligase"/>
    <property type="match status" value="1"/>
</dbReference>
<dbReference type="FunFam" id="3.40.50.800:FF:000001">
    <property type="entry name" value="Threonine--tRNA ligase"/>
    <property type="match status" value="1"/>
</dbReference>
<dbReference type="FunFam" id="3.30.980.10:FF:000005">
    <property type="entry name" value="Threonyl-tRNA synthetase, mitochondrial"/>
    <property type="match status" value="1"/>
</dbReference>
<dbReference type="Gene3D" id="3.10.20.30">
    <property type="match status" value="1"/>
</dbReference>
<dbReference type="Gene3D" id="3.30.54.20">
    <property type="match status" value="1"/>
</dbReference>
<dbReference type="Gene3D" id="3.40.50.800">
    <property type="entry name" value="Anticodon-binding domain"/>
    <property type="match status" value="1"/>
</dbReference>
<dbReference type="Gene3D" id="3.30.930.10">
    <property type="entry name" value="Bira Bifunctional Protein, Domain 2"/>
    <property type="match status" value="1"/>
</dbReference>
<dbReference type="Gene3D" id="3.30.980.10">
    <property type="entry name" value="Threonyl-trna Synthetase, Chain A, domain 2"/>
    <property type="match status" value="1"/>
</dbReference>
<dbReference type="HAMAP" id="MF_00184">
    <property type="entry name" value="Thr_tRNA_synth"/>
    <property type="match status" value="1"/>
</dbReference>
<dbReference type="InterPro" id="IPR002314">
    <property type="entry name" value="aa-tRNA-synt_IIb"/>
</dbReference>
<dbReference type="InterPro" id="IPR006195">
    <property type="entry name" value="aa-tRNA-synth_II"/>
</dbReference>
<dbReference type="InterPro" id="IPR045864">
    <property type="entry name" value="aa-tRNA-synth_II/BPL/LPL"/>
</dbReference>
<dbReference type="InterPro" id="IPR004154">
    <property type="entry name" value="Anticodon-bd"/>
</dbReference>
<dbReference type="InterPro" id="IPR036621">
    <property type="entry name" value="Anticodon-bd_dom_sf"/>
</dbReference>
<dbReference type="InterPro" id="IPR012675">
    <property type="entry name" value="Beta-grasp_dom_sf"/>
</dbReference>
<dbReference type="InterPro" id="IPR004095">
    <property type="entry name" value="TGS"/>
</dbReference>
<dbReference type="InterPro" id="IPR012676">
    <property type="entry name" value="TGS-like"/>
</dbReference>
<dbReference type="InterPro" id="IPR002320">
    <property type="entry name" value="Thr-tRNA-ligase_IIa"/>
</dbReference>
<dbReference type="InterPro" id="IPR018163">
    <property type="entry name" value="Thr/Ala-tRNA-synth_IIc_edit"/>
</dbReference>
<dbReference type="InterPro" id="IPR047246">
    <property type="entry name" value="ThrRS_anticodon"/>
</dbReference>
<dbReference type="InterPro" id="IPR033728">
    <property type="entry name" value="ThrRS_core"/>
</dbReference>
<dbReference type="InterPro" id="IPR012947">
    <property type="entry name" value="tRNA_SAD"/>
</dbReference>
<dbReference type="NCBIfam" id="TIGR00418">
    <property type="entry name" value="thrS"/>
    <property type="match status" value="1"/>
</dbReference>
<dbReference type="PANTHER" id="PTHR11451:SF44">
    <property type="entry name" value="THREONINE--TRNA LIGASE, CHLOROPLASTIC_MITOCHONDRIAL 2"/>
    <property type="match status" value="1"/>
</dbReference>
<dbReference type="PANTHER" id="PTHR11451">
    <property type="entry name" value="THREONINE-TRNA LIGASE"/>
    <property type="match status" value="1"/>
</dbReference>
<dbReference type="Pfam" id="PF03129">
    <property type="entry name" value="HGTP_anticodon"/>
    <property type="match status" value="1"/>
</dbReference>
<dbReference type="Pfam" id="PF02824">
    <property type="entry name" value="TGS"/>
    <property type="match status" value="1"/>
</dbReference>
<dbReference type="Pfam" id="PF00587">
    <property type="entry name" value="tRNA-synt_2b"/>
    <property type="match status" value="1"/>
</dbReference>
<dbReference type="Pfam" id="PF07973">
    <property type="entry name" value="tRNA_SAD"/>
    <property type="match status" value="1"/>
</dbReference>
<dbReference type="PRINTS" id="PR01047">
    <property type="entry name" value="TRNASYNTHTHR"/>
</dbReference>
<dbReference type="SMART" id="SM00863">
    <property type="entry name" value="tRNA_SAD"/>
    <property type="match status" value="1"/>
</dbReference>
<dbReference type="SUPFAM" id="SSF52954">
    <property type="entry name" value="Class II aaRS ABD-related"/>
    <property type="match status" value="1"/>
</dbReference>
<dbReference type="SUPFAM" id="SSF55681">
    <property type="entry name" value="Class II aaRS and biotin synthetases"/>
    <property type="match status" value="1"/>
</dbReference>
<dbReference type="SUPFAM" id="SSF81271">
    <property type="entry name" value="TGS-like"/>
    <property type="match status" value="1"/>
</dbReference>
<dbReference type="SUPFAM" id="SSF55186">
    <property type="entry name" value="ThrRS/AlaRS common domain"/>
    <property type="match status" value="1"/>
</dbReference>
<dbReference type="PROSITE" id="PS50862">
    <property type="entry name" value="AA_TRNA_LIGASE_II"/>
    <property type="match status" value="1"/>
</dbReference>
<dbReference type="PROSITE" id="PS51880">
    <property type="entry name" value="TGS"/>
    <property type="match status" value="1"/>
</dbReference>
<comment type="function">
    <text evidence="1">Catalyzes the attachment of threonine to tRNA(Thr) in a two-step reaction: L-threonine is first activated by ATP to form Thr-AMP and then transferred to the acceptor end of tRNA(Thr). Also edits incorrectly charged L-seryl-tRNA(Thr).</text>
</comment>
<comment type="catalytic activity">
    <reaction evidence="1">
        <text>tRNA(Thr) + L-threonine + ATP = L-threonyl-tRNA(Thr) + AMP + diphosphate + H(+)</text>
        <dbReference type="Rhea" id="RHEA:24624"/>
        <dbReference type="Rhea" id="RHEA-COMP:9670"/>
        <dbReference type="Rhea" id="RHEA-COMP:9704"/>
        <dbReference type="ChEBI" id="CHEBI:15378"/>
        <dbReference type="ChEBI" id="CHEBI:30616"/>
        <dbReference type="ChEBI" id="CHEBI:33019"/>
        <dbReference type="ChEBI" id="CHEBI:57926"/>
        <dbReference type="ChEBI" id="CHEBI:78442"/>
        <dbReference type="ChEBI" id="CHEBI:78534"/>
        <dbReference type="ChEBI" id="CHEBI:456215"/>
        <dbReference type="EC" id="6.1.1.3"/>
    </reaction>
</comment>
<comment type="cofactor">
    <cofactor evidence="1">
        <name>Zn(2+)</name>
        <dbReference type="ChEBI" id="CHEBI:29105"/>
    </cofactor>
    <text evidence="1">Binds 1 zinc ion per subunit.</text>
</comment>
<comment type="subunit">
    <text evidence="1">Homodimer.</text>
</comment>
<comment type="subcellular location">
    <subcellularLocation>
        <location evidence="1">Cytoplasm</location>
    </subcellularLocation>
</comment>
<comment type="similarity">
    <text evidence="1">Belongs to the class-II aminoacyl-tRNA synthetase family.</text>
</comment>
<accession>A1U2C3</accession>
<reference key="1">
    <citation type="journal article" date="2011" name="Appl. Environ. Microbiol.">
        <title>Genomic potential of Marinobacter aquaeolei, a biogeochemical 'opportunitroph'.</title>
        <authorList>
            <person name="Singer E."/>
            <person name="Webb E.A."/>
            <person name="Nelson W.C."/>
            <person name="Heidelberg J.F."/>
            <person name="Ivanova N."/>
            <person name="Pati A."/>
            <person name="Edwards K.J."/>
        </authorList>
    </citation>
    <scope>NUCLEOTIDE SEQUENCE [LARGE SCALE GENOMIC DNA]</scope>
    <source>
        <strain>ATCC 700491 / DSM 11845 / VT8</strain>
    </source>
</reference>
<proteinExistence type="inferred from homology"/>
<keyword id="KW-0030">Aminoacyl-tRNA synthetase</keyword>
<keyword id="KW-0067">ATP-binding</keyword>
<keyword id="KW-0963">Cytoplasm</keyword>
<keyword id="KW-0436">Ligase</keyword>
<keyword id="KW-0479">Metal-binding</keyword>
<keyword id="KW-0547">Nucleotide-binding</keyword>
<keyword id="KW-0648">Protein biosynthesis</keyword>
<keyword id="KW-0694">RNA-binding</keyword>
<keyword id="KW-0820">tRNA-binding</keyword>
<keyword id="KW-0862">Zinc</keyword>
<organism>
    <name type="scientific">Marinobacter nauticus (strain ATCC 700491 / DSM 11845 / VT8)</name>
    <name type="common">Marinobacter aquaeolei</name>
    <dbReference type="NCBI Taxonomy" id="351348"/>
    <lineage>
        <taxon>Bacteria</taxon>
        <taxon>Pseudomonadati</taxon>
        <taxon>Pseudomonadota</taxon>
        <taxon>Gammaproteobacteria</taxon>
        <taxon>Pseudomonadales</taxon>
        <taxon>Marinobacteraceae</taxon>
        <taxon>Marinobacter</taxon>
    </lineage>
</organism>
<name>SYT_MARN8</name>